<protein>
    <recommendedName>
        <fullName>Metallocarboxypeptidase inhibitor</fullName>
        <shortName evidence="1">MCPI</shortName>
    </recommendedName>
    <alternativeName>
        <fullName>Carboxypeptidase inhibitor</fullName>
        <shortName>NvCI</shortName>
    </alternativeName>
    <component>
        <recommendedName>
            <fullName>Metallocarboxypeptidase inhibitor c</fullName>
        </recommendedName>
        <alternativeName>
            <fullName>Carboxypeptidase inhibitor c</fullName>
            <shortName>NvCIc</shortName>
        </alternativeName>
    </component>
</protein>
<keyword id="KW-0002">3D-structure</keyword>
<keyword id="KW-0903">Direct protein sequencing</keyword>
<keyword id="KW-1015">Disulfide bond</keyword>
<keyword id="KW-0479">Metal-binding</keyword>
<keyword id="KW-0481">Metalloenzyme inhibitor</keyword>
<keyword id="KW-0483">Metalloprotease inhibitor</keyword>
<keyword id="KW-0646">Protease inhibitor</keyword>
<keyword id="KW-0862">Zinc</keyword>
<dbReference type="PDB" id="4A94">
    <property type="method" value="X-ray"/>
    <property type="resolution" value="1.70 A"/>
    <property type="chains" value="C/D=1-53"/>
</dbReference>
<dbReference type="PDB" id="5MRV">
    <property type="method" value="X-ray"/>
    <property type="resolution" value="1.85 A"/>
    <property type="chains" value="C=1-53"/>
</dbReference>
<dbReference type="PDBsum" id="4A94"/>
<dbReference type="PDBsum" id="5MRV"/>
<dbReference type="SMR" id="P86912"/>
<dbReference type="MEROPS" id="I92.001"/>
<dbReference type="GO" id="GO:0046872">
    <property type="term" value="F:metal ion binding"/>
    <property type="evidence" value="ECO:0007669"/>
    <property type="project" value="UniProtKB-KW"/>
</dbReference>
<dbReference type="GO" id="GO:0008191">
    <property type="term" value="F:metalloendopeptidase inhibitor activity"/>
    <property type="evidence" value="ECO:0000314"/>
    <property type="project" value="UniProtKB"/>
</dbReference>
<dbReference type="GO" id="GO:0010951">
    <property type="term" value="P:negative regulation of endopeptidase activity"/>
    <property type="evidence" value="ECO:0000314"/>
    <property type="project" value="UniProtKB"/>
</dbReference>
<dbReference type="Gene3D" id="2.10.25.90">
    <property type="match status" value="1"/>
</dbReference>
<dbReference type="InterPro" id="IPR053736">
    <property type="entry name" value="MCP_Inhibitor_Domain_sf"/>
</dbReference>
<reference key="1">
    <citation type="journal article" date="2012" name="J. Biol. Chem.">
        <title>Crystal structure of novel metallocarboxypeptidase inhibitor from marine mollusk Nerita versicolor in complex with human carboxypeptidase A4.</title>
        <authorList>
            <person name="Covaleda G."/>
            <person name="del Rivero M.A."/>
            <person name="Chavez M.A."/>
            <person name="Aviles F.X."/>
            <person name="Reverter D."/>
        </authorList>
    </citation>
    <scope>PROTEIN SEQUENCE</scope>
    <scope>X-RAY CRYSTALLOGRAPHY (1.7 ANGSTROMS) IN COMPLEX WITH HUMAN CPA4 AND ZINC</scope>
    <scope>FUNCTION</scope>
    <scope>SUBUNIT</scope>
    <scope>MASS SPECTROMETRY</scope>
    <scope>DISULFIDE BONDS</scope>
</reference>
<reference evidence="4" key="2">
    <citation type="submission" date="2013-08" db="UniProtKB">
        <title>Kinetic and proteomic identification of protease inhibitors in marine invertebrates. Characterization of a carboxypeptidase inhibitor isolated from the mollusc Nerita versicolor.</title>
        <authorList>
            <person name="Covaleda Cortes G."/>
        </authorList>
    </citation>
    <scope>PROTEIN SEQUENCE OF 2-53</scope>
    <scope>FUNCTION</scope>
    <scope>MASS SPECTROMETRY</scope>
</reference>
<organism>
    <name type="scientific">Nerita versicolor</name>
    <name type="common">Four-tooth nerite</name>
    <name type="synonym">Sea snail</name>
    <dbReference type="NCBI Taxonomy" id="159942"/>
    <lineage>
        <taxon>Eukaryota</taxon>
        <taxon>Metazoa</taxon>
        <taxon>Spiralia</taxon>
        <taxon>Lophotrochozoa</taxon>
        <taxon>Mollusca</taxon>
        <taxon>Gastropoda</taxon>
        <taxon>Neritimorpha</taxon>
        <taxon>Cycloneritida</taxon>
        <taxon>Neritoidea</taxon>
        <taxon>Neritidae</taxon>
        <taxon>Nerita</taxon>
    </lineage>
</organism>
<name>MCPI_NERVS</name>
<comment type="function">
    <text evidence="2 3">Metallocarboxypeptidase inhibitor. Has an inhibitory effect on bovine CPA1 and CPB2, human CPA1, CPA2, CPA4, CPB1 and CPB2, and porcine CPB1. Does not inhibit D.melanogaster svr (carboxypeptidase D). Shows no activity against serine proteases subtilisin or bovine trypsin, cysteine protease papain, and aspartyl protease porcine pepsin.</text>
</comment>
<comment type="subunit">
    <text evidence="2">Monomer. Interacts (via C-terminus) with human CPA4.</text>
</comment>
<comment type="mass spectrometry" mass="5944.608" method="MALDI" evidence="2">
    <molecule>Metallocarboxypeptidase inhibitor</molecule>
</comment>
<comment type="mass spectrometry" mass="5798.289" method="MALDI" evidence="3">
    <molecule>Metallocarboxypeptidase inhibitor c</molecule>
</comment>
<sequence length="53" mass="5951">FHVPDDRPCINPGRCPLVPDATCTFVCKAADNDFGYECQHVWTFEGQRVGCYA</sequence>
<accession>P86912</accession>
<feature type="chain" id="PRO_0000415947" description="Metallocarboxypeptidase inhibitor">
    <location>
        <begin position="1"/>
        <end position="53"/>
    </location>
</feature>
<feature type="chain" id="PRO_0000424664" description="Metallocarboxypeptidase inhibitor c">
    <location>
        <begin position="2"/>
        <end position="53"/>
    </location>
</feature>
<feature type="binding site" evidence="2">
    <location>
        <position position="53"/>
    </location>
    <ligand>
        <name>Zn(2+)</name>
        <dbReference type="ChEBI" id="CHEBI:29105"/>
        <note>ligand shared with metallocarboxypeptidase partner</note>
    </ligand>
</feature>
<feature type="disulfide bond" evidence="2">
    <location>
        <begin position="9"/>
        <end position="23"/>
    </location>
</feature>
<feature type="disulfide bond" evidence="2">
    <location>
        <begin position="15"/>
        <end position="51"/>
    </location>
</feature>
<feature type="disulfide bond" evidence="2">
    <location>
        <begin position="27"/>
        <end position="38"/>
    </location>
</feature>
<feature type="strand" evidence="5">
    <location>
        <begin position="22"/>
        <end position="29"/>
    </location>
</feature>
<feature type="strand" evidence="5">
    <location>
        <begin position="35"/>
        <end position="44"/>
    </location>
</feature>
<feature type="strand" evidence="5">
    <location>
        <begin position="47"/>
        <end position="49"/>
    </location>
</feature>
<proteinExistence type="evidence at protein level"/>
<evidence type="ECO:0000250" key="1">
    <source>
        <dbReference type="UniProtKB" id="P01075"/>
    </source>
</evidence>
<evidence type="ECO:0000269" key="2">
    <source>
    </source>
</evidence>
<evidence type="ECO:0000269" key="3">
    <source ref="2"/>
</evidence>
<evidence type="ECO:0000305" key="4"/>
<evidence type="ECO:0007829" key="5">
    <source>
        <dbReference type="PDB" id="4A94"/>
    </source>
</evidence>